<evidence type="ECO:0000255" key="1"/>
<evidence type="ECO:0000269" key="2">
    <source ref="1"/>
</evidence>
<evidence type="ECO:0000303" key="3">
    <source>
    </source>
</evidence>
<evidence type="ECO:0000303" key="4">
    <source ref="1"/>
</evidence>
<name>DRS7_PHYTS</name>
<feature type="peptide" id="PRO_0000376039" description="Dermaseptin-TA1" evidence="2">
    <location>
        <begin position="1"/>
        <end position="31"/>
    </location>
</feature>
<feature type="modified residue" description="Glutamine amide" evidence="2">
    <location>
        <position position="31"/>
    </location>
</feature>
<proteinExistence type="evidence at protein level"/>
<comment type="function">
    <text evidence="2">Antimicrobial peptide, active against the Gram-positive bacterium S.aureus, and the Gram-negative bacteria E.coli and P.aeruginosa. Has hemolytic activity at 286 uM.</text>
</comment>
<comment type="subcellular location">
    <subcellularLocation>
        <location evidence="2">Secreted</location>
    </subcellularLocation>
</comment>
<comment type="tissue specificity">
    <text evidence="2">Expressed by the skin glands.</text>
</comment>
<comment type="mass spectrometry" mass="3144.83" error="0.1" method="MALDI" evidence="2"/>
<comment type="similarity">
    <text evidence="1">Belongs to the frog skin active peptide (FSAP) family. Dermaseptin subfamily.</text>
</comment>
<comment type="online information" name="The antimicrobial peptide database">
    <link uri="https://wangapd3.com/database/query_output.php?ID=0956"/>
</comment>
<accession>P84927</accession>
<organism>
    <name type="scientific">Phyllomedusa tarsius</name>
    <name type="common">Brownbelly leaf frog</name>
    <name type="synonym">Phyllomedusa tarsia</name>
    <dbReference type="NCBI Taxonomy" id="306084"/>
    <lineage>
        <taxon>Eukaryota</taxon>
        <taxon>Metazoa</taxon>
        <taxon>Chordata</taxon>
        <taxon>Craniata</taxon>
        <taxon>Vertebrata</taxon>
        <taxon>Euteleostomi</taxon>
        <taxon>Amphibia</taxon>
        <taxon>Batrachia</taxon>
        <taxon>Anura</taxon>
        <taxon>Neobatrachia</taxon>
        <taxon>Hyloidea</taxon>
        <taxon>Hylidae</taxon>
        <taxon>Phyllomedusinae</taxon>
        <taxon>Phyllomedusa</taxon>
    </lineage>
</organism>
<reference key="1">
    <citation type="submission" date="2006-08" db="UniProtKB">
        <title>Dermaseptins and phylloseptins from Phyllomedusa tarsius (Amphibia).</title>
        <authorList>
            <person name="Prates M.V."/>
            <person name="Jardim D.P."/>
            <person name="Silva L.P."/>
            <person name="Gordo M."/>
            <person name="Leite J.R.S.A."/>
            <person name="Figueredo R.C.R."/>
            <person name="Amaral A.C."/>
            <person name="Felipe M.S.S."/>
            <person name="Bloch C. Jr."/>
        </authorList>
    </citation>
    <scope>PROTEIN SEQUENCE</scope>
    <scope>FUNCTION</scope>
    <scope>SUBCELLULAR LOCATION</scope>
    <scope>TISSUE SPECIFICITY</scope>
    <scope>MASS SPECTROMETRY</scope>
    <scope>AMIDATION AT GLN-31</scope>
    <source>
        <tissue>Skin secretion</tissue>
    </source>
</reference>
<reference key="2">
    <citation type="journal article" date="2008" name="Peptides">
        <title>A consistent nomenclature of antimicrobial peptides isolated from frogs of the subfamily Phyllomedusinae.</title>
        <authorList>
            <person name="Amiche M."/>
            <person name="Ladram A."/>
            <person name="Nicolas P."/>
        </authorList>
    </citation>
    <scope>NOMENCLATURE</scope>
</reference>
<protein>
    <recommendedName>
        <fullName evidence="3">Dermaseptin-TA1</fullName>
        <shortName evidence="3">DRS-TA1</shortName>
    </recommendedName>
    <alternativeName>
        <fullName evidence="4">Dermaseptin-7</fullName>
        <shortName evidence="4">DStar 07</shortName>
    </alternativeName>
</protein>
<keyword id="KW-0027">Amidation</keyword>
<keyword id="KW-0878">Amphibian defense peptide</keyword>
<keyword id="KW-0044">Antibiotic</keyword>
<keyword id="KW-0929">Antimicrobial</keyword>
<keyword id="KW-0204">Cytolysis</keyword>
<keyword id="KW-0903">Direct protein sequencing</keyword>
<keyword id="KW-0354">Hemolysis</keyword>
<keyword id="KW-0964">Secreted</keyword>
<sequence length="31" mass="3147">ALWKDVLKKIGTVALHAGKAALGAVADTISQ</sequence>
<dbReference type="GO" id="GO:0005576">
    <property type="term" value="C:extracellular region"/>
    <property type="evidence" value="ECO:0007669"/>
    <property type="project" value="UniProtKB-SubCell"/>
</dbReference>
<dbReference type="GO" id="GO:0042742">
    <property type="term" value="P:defense response to bacterium"/>
    <property type="evidence" value="ECO:0007669"/>
    <property type="project" value="UniProtKB-KW"/>
</dbReference>
<dbReference type="GO" id="GO:0031640">
    <property type="term" value="P:killing of cells of another organism"/>
    <property type="evidence" value="ECO:0007669"/>
    <property type="project" value="UniProtKB-KW"/>
</dbReference>
<dbReference type="InterPro" id="IPR022731">
    <property type="entry name" value="Dermaseptin_dom"/>
</dbReference>
<dbReference type="Pfam" id="PF12121">
    <property type="entry name" value="DD_K"/>
    <property type="match status" value="1"/>
</dbReference>